<comment type="catalytic activity">
    <reaction evidence="1">
        <text>1-(2-carboxyphenylamino)-1-deoxy-D-ribulose 5-phosphate + H(+) = (1S,2R)-1-C-(indol-3-yl)glycerol 3-phosphate + CO2 + H2O</text>
        <dbReference type="Rhea" id="RHEA:23476"/>
        <dbReference type="ChEBI" id="CHEBI:15377"/>
        <dbReference type="ChEBI" id="CHEBI:15378"/>
        <dbReference type="ChEBI" id="CHEBI:16526"/>
        <dbReference type="ChEBI" id="CHEBI:58613"/>
        <dbReference type="ChEBI" id="CHEBI:58866"/>
        <dbReference type="EC" id="4.1.1.48"/>
    </reaction>
</comment>
<comment type="pathway">
    <text evidence="1">Amino-acid biosynthesis; L-tryptophan biosynthesis; L-tryptophan from chorismate: step 4/5.</text>
</comment>
<comment type="similarity">
    <text evidence="1">Belongs to the TrpC family.</text>
</comment>
<proteinExistence type="inferred from homology"/>
<reference key="1">
    <citation type="submission" date="2008-06" db="EMBL/GenBank/DDBJ databases">
        <title>Complete sequence of Chloroherpeton thalassium ATCC 35110.</title>
        <authorList>
            <consortium name="US DOE Joint Genome Institute"/>
            <person name="Lucas S."/>
            <person name="Copeland A."/>
            <person name="Lapidus A."/>
            <person name="Glavina del Rio T."/>
            <person name="Dalin E."/>
            <person name="Tice H."/>
            <person name="Bruce D."/>
            <person name="Goodwin L."/>
            <person name="Pitluck S."/>
            <person name="Schmutz J."/>
            <person name="Larimer F."/>
            <person name="Land M."/>
            <person name="Hauser L."/>
            <person name="Kyrpides N."/>
            <person name="Mikhailova N."/>
            <person name="Liu Z."/>
            <person name="Li T."/>
            <person name="Zhao F."/>
            <person name="Overmann J."/>
            <person name="Bryant D.A."/>
            <person name="Richardson P."/>
        </authorList>
    </citation>
    <scope>NUCLEOTIDE SEQUENCE [LARGE SCALE GENOMIC DNA]</scope>
    <source>
        <strain>ATCC 35110 / GB-78</strain>
    </source>
</reference>
<name>TRPC_CHLT3</name>
<dbReference type="EC" id="4.1.1.48" evidence="1"/>
<dbReference type="EMBL" id="CP001100">
    <property type="protein sequence ID" value="ACF13829.1"/>
    <property type="molecule type" value="Genomic_DNA"/>
</dbReference>
<dbReference type="RefSeq" id="WP_012499913.1">
    <property type="nucleotide sequence ID" value="NC_011026.1"/>
</dbReference>
<dbReference type="SMR" id="B3QZD6"/>
<dbReference type="STRING" id="517418.Ctha_1366"/>
<dbReference type="KEGG" id="cts:Ctha_1366"/>
<dbReference type="eggNOG" id="COG0134">
    <property type="taxonomic scope" value="Bacteria"/>
</dbReference>
<dbReference type="HOGENOM" id="CLU_034247_2_0_10"/>
<dbReference type="OrthoDB" id="9804217at2"/>
<dbReference type="UniPathway" id="UPA00035">
    <property type="reaction ID" value="UER00043"/>
</dbReference>
<dbReference type="Proteomes" id="UP000001208">
    <property type="component" value="Chromosome"/>
</dbReference>
<dbReference type="GO" id="GO:0004425">
    <property type="term" value="F:indole-3-glycerol-phosphate synthase activity"/>
    <property type="evidence" value="ECO:0007669"/>
    <property type="project" value="UniProtKB-UniRule"/>
</dbReference>
<dbReference type="GO" id="GO:0004640">
    <property type="term" value="F:phosphoribosylanthranilate isomerase activity"/>
    <property type="evidence" value="ECO:0007669"/>
    <property type="project" value="TreeGrafter"/>
</dbReference>
<dbReference type="GO" id="GO:0000162">
    <property type="term" value="P:L-tryptophan biosynthetic process"/>
    <property type="evidence" value="ECO:0007669"/>
    <property type="project" value="UniProtKB-UniRule"/>
</dbReference>
<dbReference type="CDD" id="cd00331">
    <property type="entry name" value="IGPS"/>
    <property type="match status" value="1"/>
</dbReference>
<dbReference type="FunFam" id="3.20.20.70:FF:000024">
    <property type="entry name" value="Indole-3-glycerol phosphate synthase"/>
    <property type="match status" value="1"/>
</dbReference>
<dbReference type="Gene3D" id="3.20.20.70">
    <property type="entry name" value="Aldolase class I"/>
    <property type="match status" value="1"/>
</dbReference>
<dbReference type="HAMAP" id="MF_00134_B">
    <property type="entry name" value="IGPS_B"/>
    <property type="match status" value="1"/>
</dbReference>
<dbReference type="InterPro" id="IPR013785">
    <property type="entry name" value="Aldolase_TIM"/>
</dbReference>
<dbReference type="InterPro" id="IPR045186">
    <property type="entry name" value="Indole-3-glycerol_P_synth"/>
</dbReference>
<dbReference type="InterPro" id="IPR013798">
    <property type="entry name" value="Indole-3-glycerol_P_synth_dom"/>
</dbReference>
<dbReference type="InterPro" id="IPR001468">
    <property type="entry name" value="Indole-3-GlycerolPSynthase_CS"/>
</dbReference>
<dbReference type="InterPro" id="IPR011060">
    <property type="entry name" value="RibuloseP-bd_barrel"/>
</dbReference>
<dbReference type="NCBIfam" id="NF001377">
    <property type="entry name" value="PRK00278.2-4"/>
    <property type="match status" value="1"/>
</dbReference>
<dbReference type="PANTHER" id="PTHR22854:SF2">
    <property type="entry name" value="INDOLE-3-GLYCEROL-PHOSPHATE SYNTHASE"/>
    <property type="match status" value="1"/>
</dbReference>
<dbReference type="PANTHER" id="PTHR22854">
    <property type="entry name" value="TRYPTOPHAN BIOSYNTHESIS PROTEIN"/>
    <property type="match status" value="1"/>
</dbReference>
<dbReference type="Pfam" id="PF00218">
    <property type="entry name" value="IGPS"/>
    <property type="match status" value="1"/>
</dbReference>
<dbReference type="SUPFAM" id="SSF51366">
    <property type="entry name" value="Ribulose-phoshate binding barrel"/>
    <property type="match status" value="1"/>
</dbReference>
<dbReference type="PROSITE" id="PS00614">
    <property type="entry name" value="IGPS"/>
    <property type="match status" value="1"/>
</dbReference>
<keyword id="KW-0028">Amino-acid biosynthesis</keyword>
<keyword id="KW-0057">Aromatic amino acid biosynthesis</keyword>
<keyword id="KW-0210">Decarboxylase</keyword>
<keyword id="KW-0456">Lyase</keyword>
<keyword id="KW-1185">Reference proteome</keyword>
<keyword id="KW-0822">Tryptophan biosynthesis</keyword>
<organism>
    <name type="scientific">Chloroherpeton thalassium (strain ATCC 35110 / GB-78)</name>
    <dbReference type="NCBI Taxonomy" id="517418"/>
    <lineage>
        <taxon>Bacteria</taxon>
        <taxon>Pseudomonadati</taxon>
        <taxon>Chlorobiota</taxon>
        <taxon>Chlorobiia</taxon>
        <taxon>Chlorobiales</taxon>
        <taxon>Chloroherpetonaceae</taxon>
        <taxon>Chloroherpeton</taxon>
    </lineage>
</organism>
<gene>
    <name evidence="1" type="primary">trpC</name>
    <name type="ordered locus">Ctha_1366</name>
</gene>
<sequence>MTYLDKILEHKRKEIEALKPQNFKKQFESQAENLPAPRDFAAALRRKAPSEPLRLIAELKKASPSRGVMVHDFKPLEIAERYRTLGASAYSVLTDEEFFQGHANYLKAVRENFDLPVLRKDFIIDESQIYEARLLGADALLLIVAALSPEALLQFRELAESLGMSALVEVHSKPELDIAVACGATIIGVNNRDLRTFKVNIQTSVELFASYPNDVIAVSESGIKTPEDLQQLADAGFDAVLIGEGLITSERLAAYGWNEK</sequence>
<accession>B3QZD6</accession>
<protein>
    <recommendedName>
        <fullName evidence="1">Indole-3-glycerol phosphate synthase</fullName>
        <shortName evidence="1">IGPS</shortName>
        <ecNumber evidence="1">4.1.1.48</ecNumber>
    </recommendedName>
</protein>
<evidence type="ECO:0000255" key="1">
    <source>
        <dbReference type="HAMAP-Rule" id="MF_00134"/>
    </source>
</evidence>
<feature type="chain" id="PRO_1000095860" description="Indole-3-glycerol phosphate synthase">
    <location>
        <begin position="1"/>
        <end position="260"/>
    </location>
</feature>